<organism>
    <name type="scientific">Plasmopara halstedii</name>
    <name type="common">Downy mildew of sunflower</name>
    <dbReference type="NCBI Taxonomy" id="4781"/>
    <lineage>
        <taxon>Eukaryota</taxon>
        <taxon>Sar</taxon>
        <taxon>Stramenopiles</taxon>
        <taxon>Oomycota</taxon>
        <taxon>Peronosporales</taxon>
        <taxon>Peronosporaceae</taxon>
        <taxon>Plasmopara</taxon>
    </lineage>
</organism>
<accession>A0A0P1ATX0</accession>
<dbReference type="EMBL" id="CCYD01001640">
    <property type="protein sequence ID" value="CEG45727.1"/>
    <property type="molecule type" value="Genomic_DNA"/>
</dbReference>
<dbReference type="EnsemblProtists" id="CEG45727">
    <property type="protein sequence ID" value="CEG45727"/>
    <property type="gene ID" value="CEG45727"/>
</dbReference>
<dbReference type="Proteomes" id="UP000054928">
    <property type="component" value="Unassembled WGS sequence"/>
</dbReference>
<dbReference type="GO" id="GO:0005576">
    <property type="term" value="C:extracellular region"/>
    <property type="evidence" value="ECO:0007669"/>
    <property type="project" value="UniProtKB-SubCell"/>
</dbReference>
<dbReference type="GO" id="GO:0044167">
    <property type="term" value="C:host cell endoplasmic reticulum membrane"/>
    <property type="evidence" value="ECO:0007669"/>
    <property type="project" value="UniProtKB-SubCell"/>
</dbReference>
<dbReference type="GO" id="GO:0016020">
    <property type="term" value="C:membrane"/>
    <property type="evidence" value="ECO:0007669"/>
    <property type="project" value="UniProtKB-KW"/>
</dbReference>
<keyword id="KW-1038">Host endoplasmic reticulum</keyword>
<keyword id="KW-1043">Host membrane</keyword>
<keyword id="KW-0472">Membrane</keyword>
<keyword id="KW-1185">Reference proteome</keyword>
<keyword id="KW-0964">Secreted</keyword>
<keyword id="KW-0732">Signal</keyword>
<keyword id="KW-0812">Transmembrane</keyword>
<keyword id="KW-1133">Transmembrane helix</keyword>
<keyword id="KW-0843">Virulence</keyword>
<feature type="signal peptide" evidence="1">
    <location>
        <begin position="1"/>
        <end position="23"/>
    </location>
</feature>
<feature type="chain" id="PRO_5006058920" description="Secreted RxLR effector protein RXLR-C21" evidence="1">
    <location>
        <begin position="24"/>
        <end position="123"/>
    </location>
</feature>
<feature type="transmembrane region" description="Helical" evidence="1">
    <location>
        <begin position="101"/>
        <end position="121"/>
    </location>
</feature>
<feature type="short sequence motif" description="RxLR-dEER" evidence="5">
    <location>
        <begin position="32"/>
        <end position="65"/>
    </location>
</feature>
<evidence type="ECO:0000255" key="1"/>
<evidence type="ECO:0000269" key="2">
    <source>
    </source>
</evidence>
<evidence type="ECO:0000303" key="3">
    <source>
    </source>
</evidence>
<evidence type="ECO:0000305" key="4"/>
<evidence type="ECO:0000305" key="5">
    <source>
    </source>
</evidence>
<comment type="function">
    <text evidence="2">Secreted effector that does not suppress pattern-triggered immunity (PTI) in plant host.</text>
</comment>
<comment type="subcellular location">
    <subcellularLocation>
        <location evidence="2">Secreted</location>
    </subcellularLocation>
    <subcellularLocation>
        <location evidence="2">Host endoplasmic reticulum membrane</location>
        <topology evidence="1">Single-pass membrane protein</topology>
    </subcellularLocation>
</comment>
<comment type="induction">
    <text evidence="2">Expression is up-regulated during the late plant infection stages.</text>
</comment>
<comment type="domain">
    <text evidence="5">The RxLR-dEER motif acts to carry the protein into the host cell cytoplasm through binding to cell surface phosphatidylinositol-3-phosphate.</text>
</comment>
<comment type="similarity">
    <text evidence="4">Belongs to the RxLR effector family.</text>
</comment>
<proteinExistence type="evidence at transcript level"/>
<sequence>MRLHLLVLSVIVVSLLVSDNAHANSHDDSKTRALRETPINGLVTNQLAVSRNLTPAKFITNSEERHSSEKKSRRLQIYFHSPYYGIHPVDYHYVGSYESGVTTICSIVLFVMVFGCLYKIFSQ</sequence>
<reference key="1">
    <citation type="journal article" date="2015" name="BMC Genomics">
        <title>Genome analyses of the sunflower pathogen Plasmopara halstedii provide insights into effector evolution in downy mildews and Phytophthora.</title>
        <authorList>
            <person name="Sharma R."/>
            <person name="Xia X."/>
            <person name="Cano L.M."/>
            <person name="Evangelisti E."/>
            <person name="Kemen E."/>
            <person name="Judelson H."/>
            <person name="Oome S."/>
            <person name="Sambles C."/>
            <person name="van den Hoogen D.J."/>
            <person name="Kitner M."/>
            <person name="Klein J."/>
            <person name="Meijer H.J."/>
            <person name="Spring O."/>
            <person name="Win J."/>
            <person name="Zipper R."/>
            <person name="Bode H.B."/>
            <person name="Govers F."/>
            <person name="Kamoun S."/>
            <person name="Schornack S."/>
            <person name="Studholme D.J."/>
            <person name="Van den Ackerveken G."/>
            <person name="Thines M."/>
        </authorList>
    </citation>
    <scope>NUCLEOTIDE SEQUENCE [LARGE SCALE GENOMIC DNA]</scope>
</reference>
<reference key="2">
    <citation type="journal article" date="2019" name="Plant J.">
        <title>Sunflower resistance to multiple downy mildew pathotypes revealed by recognition of conserved effectors of the oomycete Plasmopara halstedii.</title>
        <authorList>
            <person name="Pecrix Y."/>
            <person name="Buendia L."/>
            <person name="Penouilh-Suzette C."/>
            <person name="Marechaux M."/>
            <person name="Legrand L."/>
            <person name="Bouchez O."/>
            <person name="Rengel D."/>
            <person name="Gouzy J."/>
            <person name="Cottret L."/>
            <person name="Vear F."/>
            <person name="Godiard L."/>
        </authorList>
    </citation>
    <scope>DOMAIN</scope>
    <scope>INDUCTION</scope>
    <scope>FUNCTION</scope>
    <scope>SUBCELLULAR LOCATION</scope>
</reference>
<protein>
    <recommendedName>
        <fullName evidence="3">Secreted RxLR effector protein RXLR-C21</fullName>
    </recommendedName>
</protein>
<name>RLR21_PLAHL</name>
<gene>
    <name evidence="3" type="primary">RXLR-C21</name>
</gene>